<sequence>MQNQRIRIRLKGFDHRLIDQSTAEIVETAKRTGAQVRGPIPLPTRKERYTILISPHVNKDARDQYELRTHKRLVDIVEPTEKTVDALMRLDLAAGVDVQISLG</sequence>
<dbReference type="EMBL" id="CP000753">
    <property type="protein sequence ID" value="ABS06366.1"/>
    <property type="molecule type" value="Genomic_DNA"/>
</dbReference>
<dbReference type="RefSeq" id="WP_006083601.1">
    <property type="nucleotide sequence ID" value="NC_009665.1"/>
</dbReference>
<dbReference type="SMR" id="A6WHS7"/>
<dbReference type="GeneID" id="67441759"/>
<dbReference type="KEGG" id="sbm:Shew185_0195"/>
<dbReference type="HOGENOM" id="CLU_122625_1_3_6"/>
<dbReference type="GO" id="GO:1990904">
    <property type="term" value="C:ribonucleoprotein complex"/>
    <property type="evidence" value="ECO:0007669"/>
    <property type="project" value="UniProtKB-KW"/>
</dbReference>
<dbReference type="GO" id="GO:0005840">
    <property type="term" value="C:ribosome"/>
    <property type="evidence" value="ECO:0007669"/>
    <property type="project" value="UniProtKB-KW"/>
</dbReference>
<dbReference type="GO" id="GO:0003735">
    <property type="term" value="F:structural constituent of ribosome"/>
    <property type="evidence" value="ECO:0007669"/>
    <property type="project" value="InterPro"/>
</dbReference>
<dbReference type="GO" id="GO:0000049">
    <property type="term" value="F:tRNA binding"/>
    <property type="evidence" value="ECO:0007669"/>
    <property type="project" value="UniProtKB-UniRule"/>
</dbReference>
<dbReference type="GO" id="GO:0006412">
    <property type="term" value="P:translation"/>
    <property type="evidence" value="ECO:0007669"/>
    <property type="project" value="UniProtKB-UniRule"/>
</dbReference>
<dbReference type="FunFam" id="3.30.70.600:FF:000001">
    <property type="entry name" value="30S ribosomal protein S10"/>
    <property type="match status" value="1"/>
</dbReference>
<dbReference type="Gene3D" id="3.30.70.600">
    <property type="entry name" value="Ribosomal protein S10 domain"/>
    <property type="match status" value="1"/>
</dbReference>
<dbReference type="HAMAP" id="MF_00508">
    <property type="entry name" value="Ribosomal_uS10"/>
    <property type="match status" value="1"/>
</dbReference>
<dbReference type="InterPro" id="IPR001848">
    <property type="entry name" value="Ribosomal_uS10"/>
</dbReference>
<dbReference type="InterPro" id="IPR018268">
    <property type="entry name" value="Ribosomal_uS10_CS"/>
</dbReference>
<dbReference type="InterPro" id="IPR027486">
    <property type="entry name" value="Ribosomal_uS10_dom"/>
</dbReference>
<dbReference type="InterPro" id="IPR036838">
    <property type="entry name" value="Ribosomal_uS10_dom_sf"/>
</dbReference>
<dbReference type="NCBIfam" id="NF001861">
    <property type="entry name" value="PRK00596.1"/>
    <property type="match status" value="1"/>
</dbReference>
<dbReference type="NCBIfam" id="TIGR01049">
    <property type="entry name" value="rpsJ_bact"/>
    <property type="match status" value="1"/>
</dbReference>
<dbReference type="PANTHER" id="PTHR11700">
    <property type="entry name" value="30S RIBOSOMAL PROTEIN S10 FAMILY MEMBER"/>
    <property type="match status" value="1"/>
</dbReference>
<dbReference type="Pfam" id="PF00338">
    <property type="entry name" value="Ribosomal_S10"/>
    <property type="match status" value="1"/>
</dbReference>
<dbReference type="PRINTS" id="PR00971">
    <property type="entry name" value="RIBOSOMALS10"/>
</dbReference>
<dbReference type="SMART" id="SM01403">
    <property type="entry name" value="Ribosomal_S10"/>
    <property type="match status" value="1"/>
</dbReference>
<dbReference type="SUPFAM" id="SSF54999">
    <property type="entry name" value="Ribosomal protein S10"/>
    <property type="match status" value="1"/>
</dbReference>
<dbReference type="PROSITE" id="PS00361">
    <property type="entry name" value="RIBOSOMAL_S10"/>
    <property type="match status" value="1"/>
</dbReference>
<keyword id="KW-0687">Ribonucleoprotein</keyword>
<keyword id="KW-0689">Ribosomal protein</keyword>
<comment type="function">
    <text evidence="1">Involved in the binding of tRNA to the ribosomes.</text>
</comment>
<comment type="subunit">
    <text evidence="1">Part of the 30S ribosomal subunit.</text>
</comment>
<comment type="similarity">
    <text evidence="1">Belongs to the universal ribosomal protein uS10 family.</text>
</comment>
<proteinExistence type="inferred from homology"/>
<reference key="1">
    <citation type="submission" date="2007-07" db="EMBL/GenBank/DDBJ databases">
        <title>Complete sequence of chromosome of Shewanella baltica OS185.</title>
        <authorList>
            <consortium name="US DOE Joint Genome Institute"/>
            <person name="Copeland A."/>
            <person name="Lucas S."/>
            <person name="Lapidus A."/>
            <person name="Barry K."/>
            <person name="Glavina del Rio T."/>
            <person name="Dalin E."/>
            <person name="Tice H."/>
            <person name="Pitluck S."/>
            <person name="Sims D."/>
            <person name="Brettin T."/>
            <person name="Bruce D."/>
            <person name="Detter J.C."/>
            <person name="Han C."/>
            <person name="Schmutz J."/>
            <person name="Larimer F."/>
            <person name="Land M."/>
            <person name="Hauser L."/>
            <person name="Kyrpides N."/>
            <person name="Mikhailova N."/>
            <person name="Brettar I."/>
            <person name="Rodrigues J."/>
            <person name="Konstantinidis K."/>
            <person name="Tiedje J."/>
            <person name="Richardson P."/>
        </authorList>
    </citation>
    <scope>NUCLEOTIDE SEQUENCE [LARGE SCALE GENOMIC DNA]</scope>
    <source>
        <strain>OS185</strain>
    </source>
</reference>
<evidence type="ECO:0000255" key="1">
    <source>
        <dbReference type="HAMAP-Rule" id="MF_00508"/>
    </source>
</evidence>
<evidence type="ECO:0000305" key="2"/>
<name>RS10_SHEB8</name>
<gene>
    <name evidence="1" type="primary">rpsJ</name>
    <name type="ordered locus">Shew185_0195</name>
</gene>
<organism>
    <name type="scientific">Shewanella baltica (strain OS185)</name>
    <dbReference type="NCBI Taxonomy" id="402882"/>
    <lineage>
        <taxon>Bacteria</taxon>
        <taxon>Pseudomonadati</taxon>
        <taxon>Pseudomonadota</taxon>
        <taxon>Gammaproteobacteria</taxon>
        <taxon>Alteromonadales</taxon>
        <taxon>Shewanellaceae</taxon>
        <taxon>Shewanella</taxon>
    </lineage>
</organism>
<feature type="chain" id="PRO_1000015108" description="Small ribosomal subunit protein uS10">
    <location>
        <begin position="1"/>
        <end position="103"/>
    </location>
</feature>
<accession>A6WHS7</accession>
<protein>
    <recommendedName>
        <fullName evidence="1">Small ribosomal subunit protein uS10</fullName>
    </recommendedName>
    <alternativeName>
        <fullName evidence="2">30S ribosomal protein S10</fullName>
    </alternativeName>
</protein>